<accession>Q47474</accession>
<accession>E0SL58</accession>
<protein>
    <recommendedName>
        <fullName>Pectinesterase B</fullName>
        <shortName>PE B</shortName>
        <ecNumber evidence="3">3.1.1.11</ecNumber>
    </recommendedName>
    <alternativeName>
        <fullName>Pectin methylesterase B</fullName>
    </alternativeName>
</protein>
<proteinExistence type="evidence at protein level"/>
<gene>
    <name evidence="4" type="primary">pemB</name>
    <name type="ordered locus">Dda3937_03435</name>
</gene>
<keyword id="KW-0063">Aspartyl esterase</keyword>
<keyword id="KW-0998">Cell outer membrane</keyword>
<keyword id="KW-0378">Hydrolase</keyword>
<keyword id="KW-0449">Lipoprotein</keyword>
<keyword id="KW-0472">Membrane</keyword>
<keyword id="KW-0564">Palmitate</keyword>
<keyword id="KW-1185">Reference proteome</keyword>
<keyword id="KW-0732">Signal</keyword>
<sequence length="433" mass="47190">MSLTHYSGLAAAVSMSLILTACGGQTPNSARFQPVFPGTVSRPVLSAQEAGRFTPQHYFAHGGEYAKPVADGWTPTPIDTSRVTAAYVVGPRAGVAGATHTSIQQAVNAALRQHPGQTRVYIKLLPGTYTGTVYVPEGAPPLTLFGAGDRPEQVVVSLALDSMMSPADYRARVNPHGQYQPADPAWYMYNACATKAGATINTTCSAVMWSQSNDFQLKNLTVVNALLDTVDSGTHQAVALRTDGDRVQLENVRLLSRQDTFFVNTSDRQNSYVTDHYSRAYIKDSYIEGDVDYVFGRATAVFDRVRFHTVSSRGSKEAYVFAPDSIPSVKYGFLVINSQLTGDNGYRGAQKAKLGRAWDQGAKQTGYLPGKTANGQLVIRDSTIDSSYDLANPWGAAATTDRPFKGNISPQRDLDDIHFNRLWEYNTQVLLHE</sequence>
<comment type="function">
    <text evidence="3">Probably involved in the degradation of methylated oligogalacturonides present in the periplasm. More active on methylated oligogalacturides than on pectin.</text>
</comment>
<comment type="catalytic activity">
    <reaction evidence="3">
        <text>[(1-&gt;4)-alpha-D-galacturonosyl methyl ester](n) + n H2O = [(1-&gt;4)-alpha-D-galacturonosyl](n) + n methanol + n H(+)</text>
        <dbReference type="Rhea" id="RHEA:22380"/>
        <dbReference type="Rhea" id="RHEA-COMP:14570"/>
        <dbReference type="Rhea" id="RHEA-COMP:14573"/>
        <dbReference type="ChEBI" id="CHEBI:15377"/>
        <dbReference type="ChEBI" id="CHEBI:15378"/>
        <dbReference type="ChEBI" id="CHEBI:17790"/>
        <dbReference type="ChEBI" id="CHEBI:140522"/>
        <dbReference type="ChEBI" id="CHEBI:140523"/>
        <dbReference type="EC" id="3.1.1.11"/>
    </reaction>
</comment>
<comment type="biophysicochemical properties">
    <phDependence>
        <text evidence="3">Optimum pH is 7.5.</text>
    </phDependence>
    <temperatureDependence>
        <text evidence="3">Optimum temperature is 40 degrees Celsius.</text>
    </temperatureDependence>
</comment>
<comment type="pathway">
    <text>Glycan metabolism; pectin degradation; 2-dehydro-3-deoxy-D-gluconate from pectin: step 1/5.</text>
</comment>
<comment type="subcellular location">
    <subcellularLocation>
        <location evidence="3">Cell outer membrane</location>
        <topology evidence="3">Lipid-anchor</topology>
    </subcellularLocation>
    <text evidence="6">Probably active in the periplasm.</text>
</comment>
<comment type="induction">
    <text evidence="3">By polygalacturonates and galacturonate. Repressed by kdgR.</text>
</comment>
<comment type="disruption phenotype">
    <text evidence="3">Decreased growth on methylated oligogalacturides; double pemA-pemB deletions grow very poorly on methylated oligogalacturides.</text>
</comment>
<comment type="similarity">
    <text evidence="5">Belongs to the pectinesterase family.</text>
</comment>
<evidence type="ECO:0000250" key="1"/>
<evidence type="ECO:0000255" key="2">
    <source>
        <dbReference type="PROSITE-ProRule" id="PRU10040"/>
    </source>
</evidence>
<evidence type="ECO:0000269" key="3">
    <source>
    </source>
</evidence>
<evidence type="ECO:0000303" key="4">
    <source>
    </source>
</evidence>
<evidence type="ECO:0000305" key="5"/>
<evidence type="ECO:0000305" key="6">
    <source>
    </source>
</evidence>
<feature type="signal peptide">
    <location>
        <begin position="1"/>
        <end position="21"/>
    </location>
</feature>
<feature type="chain" id="PRO_0000023499" description="Pectinesterase B">
    <location>
        <begin position="22"/>
        <end position="433"/>
    </location>
</feature>
<feature type="topological domain" description="Periplasmic" evidence="6">
    <location>
        <begin position="22"/>
        <end position="433"/>
    </location>
</feature>
<feature type="active site" description="Proton donor" evidence="2">
    <location>
        <position position="259"/>
    </location>
</feature>
<feature type="active site" description="Nucleophile" evidence="2">
    <location>
        <position position="292"/>
    </location>
</feature>
<feature type="binding site" evidence="1">
    <location>
        <position position="202"/>
    </location>
    <ligand>
        <name>substrate</name>
    </ligand>
</feature>
<feature type="binding site" evidence="1">
    <location>
        <position position="236"/>
    </location>
    <ligand>
        <name>substrate</name>
    </ligand>
</feature>
<feature type="binding site" evidence="1">
    <location>
        <position position="356"/>
    </location>
    <ligand>
        <name>substrate</name>
    </ligand>
</feature>
<feature type="binding site" evidence="1">
    <location>
        <position position="358"/>
    </location>
    <ligand>
        <name>substrate</name>
    </ligand>
</feature>
<feature type="lipid moiety-binding region" description="N-palmitoyl cysteine" evidence="3">
    <location>
        <position position="22"/>
    </location>
</feature>
<feature type="lipid moiety-binding region" description="S-diacylglycerol cysteine" evidence="6">
    <location>
        <position position="22"/>
    </location>
</feature>
<feature type="sequence conflict" description="In Ref. 1; CAA59151." evidence="5" ref="1">
    <original>DRVQLENVRLLSRQ</original>
    <variation>ESGATGKCPPAQPS</variation>
    <location>
        <begin position="245"/>
        <end position="258"/>
    </location>
</feature>
<reference key="1">
    <citation type="journal article" date="1996" name="Mol. Microbiol.">
        <title>Characterization of pectin methylesterase B, an outer membrane lipoprotein of Erwinia chrysanthemi 3937.</title>
        <authorList>
            <person name="Shevchik V.E."/>
            <person name="Condemine G."/>
            <person name="Hugouvieux-Cotte-Pattat N."/>
            <person name="Robert-Baudouy J."/>
        </authorList>
    </citation>
    <scope>NUCLEOTIDE SEQUENCE [GENOMIC DNA]</scope>
    <scope>FUNCTION</scope>
    <scope>CATALYTIC ACTIVITY</scope>
    <scope>SUBSTRATE SPECIFICITY</scope>
    <scope>BIOPHYSICOCHEMICAL PROPERTIES</scope>
    <scope>SUBCELLULAR LOCATION</scope>
    <scope>DISRUPTION PHENOTYPE</scope>
    <scope>PROBABLE TOPOLOGY</scope>
    <scope>DIACYLGLYCEROL AT CYS-22</scope>
    <scope>PALMITOYLATION AT CYS-22</scope>
    <source>
        <strain>3937</strain>
    </source>
</reference>
<reference key="2">
    <citation type="journal article" date="2011" name="J. Bacteriol.">
        <title>Genome sequence of the plant-pathogenic bacterium Dickeya dadantii 3937.</title>
        <authorList>
            <person name="Glasner J.D."/>
            <person name="Yang C.H."/>
            <person name="Reverchon S."/>
            <person name="Hugouvieux-Cotte-Pattat N."/>
            <person name="Condemine G."/>
            <person name="Bohin J.P."/>
            <person name="Van Gijsegem F."/>
            <person name="Yang S."/>
            <person name="Franza T."/>
            <person name="Expert D."/>
            <person name="Plunkett G. III"/>
            <person name="San Francisco M.J."/>
            <person name="Charkowski A.O."/>
            <person name="Py B."/>
            <person name="Bell K."/>
            <person name="Rauscher L."/>
            <person name="Rodriguez-Palenzuela P."/>
            <person name="Toussaint A."/>
            <person name="Holeva M.C."/>
            <person name="He S.Y."/>
            <person name="Douet V."/>
            <person name="Boccara M."/>
            <person name="Blanco C."/>
            <person name="Toth I."/>
            <person name="Anderson B.D."/>
            <person name="Biehl B.S."/>
            <person name="Mau B."/>
            <person name="Flynn S.M."/>
            <person name="Barras F."/>
            <person name="Lindeberg M."/>
            <person name="Birch P.R."/>
            <person name="Tsuyumu S."/>
            <person name="Shi X."/>
            <person name="Hibbing M."/>
            <person name="Yap M.N."/>
            <person name="Carpentier M."/>
            <person name="Dassa E."/>
            <person name="Umehara M."/>
            <person name="Kim J.F."/>
            <person name="Rusch M."/>
            <person name="Soni P."/>
            <person name="Mayhew G.F."/>
            <person name="Fouts D.E."/>
            <person name="Gill S.R."/>
            <person name="Blattner F.R."/>
            <person name="Keen N.T."/>
            <person name="Perna N.T."/>
        </authorList>
    </citation>
    <scope>NUCLEOTIDE SEQUENCE [LARGE SCALE GENOMIC DNA]</scope>
    <source>
        <strain>3937</strain>
    </source>
</reference>
<dbReference type="EC" id="3.1.1.11" evidence="3"/>
<dbReference type="EMBL" id="X84665">
    <property type="protein sequence ID" value="CAA59151.1"/>
    <property type="molecule type" value="Genomic_DNA"/>
</dbReference>
<dbReference type="EMBL" id="CP002038">
    <property type="protein sequence ID" value="ADM98093.1"/>
    <property type="molecule type" value="Genomic_DNA"/>
</dbReference>
<dbReference type="PIR" id="S70914">
    <property type="entry name" value="S70914"/>
</dbReference>
<dbReference type="RefSeq" id="WP_013317553.1">
    <property type="nucleotide sequence ID" value="NC_014500.1"/>
</dbReference>
<dbReference type="SMR" id="Q47474"/>
<dbReference type="STRING" id="198628.Dda3937_03435"/>
<dbReference type="KEGG" id="ddd:Dda3937_03435"/>
<dbReference type="eggNOG" id="COG4677">
    <property type="taxonomic scope" value="Bacteria"/>
</dbReference>
<dbReference type="HOGENOM" id="CLU_012243_5_0_6"/>
<dbReference type="OrthoDB" id="264773at2"/>
<dbReference type="UniPathway" id="UPA00545">
    <property type="reaction ID" value="UER00823"/>
</dbReference>
<dbReference type="Proteomes" id="UP000006859">
    <property type="component" value="Chromosome"/>
</dbReference>
<dbReference type="GO" id="GO:0009279">
    <property type="term" value="C:cell outer membrane"/>
    <property type="evidence" value="ECO:0000314"/>
    <property type="project" value="ASAP"/>
</dbReference>
<dbReference type="GO" id="GO:0030599">
    <property type="term" value="F:pectinesterase activity"/>
    <property type="evidence" value="ECO:0000314"/>
    <property type="project" value="ASAP"/>
</dbReference>
<dbReference type="GO" id="GO:0042545">
    <property type="term" value="P:cell wall modification"/>
    <property type="evidence" value="ECO:0007669"/>
    <property type="project" value="InterPro"/>
</dbReference>
<dbReference type="GO" id="GO:0045490">
    <property type="term" value="P:pectin catabolic process"/>
    <property type="evidence" value="ECO:0007669"/>
    <property type="project" value="UniProtKB-UniPathway"/>
</dbReference>
<dbReference type="GO" id="GO:0045488">
    <property type="term" value="P:pectin metabolic process"/>
    <property type="evidence" value="ECO:0000314"/>
    <property type="project" value="ASAP"/>
</dbReference>
<dbReference type="Gene3D" id="2.160.20.10">
    <property type="entry name" value="Single-stranded right-handed beta-helix, Pectin lyase-like"/>
    <property type="match status" value="1"/>
</dbReference>
<dbReference type="InterPro" id="IPR012334">
    <property type="entry name" value="Pectin_lyas_fold"/>
</dbReference>
<dbReference type="InterPro" id="IPR011050">
    <property type="entry name" value="Pectin_lyase_fold/virulence"/>
</dbReference>
<dbReference type="InterPro" id="IPR054974">
    <property type="entry name" value="Pectinest_B"/>
</dbReference>
<dbReference type="InterPro" id="IPR033131">
    <property type="entry name" value="Pectinesterase_Asp_AS"/>
</dbReference>
<dbReference type="InterPro" id="IPR000070">
    <property type="entry name" value="Pectinesterase_cat"/>
</dbReference>
<dbReference type="NCBIfam" id="NF041901">
    <property type="entry name" value="pecestase_PemB"/>
    <property type="match status" value="1"/>
</dbReference>
<dbReference type="NCBIfam" id="NF007822">
    <property type="entry name" value="PRK10531.1"/>
    <property type="match status" value="1"/>
</dbReference>
<dbReference type="PANTHER" id="PTHR31321">
    <property type="entry name" value="ACYL-COA THIOESTER HYDROLASE YBHC-RELATED"/>
    <property type="match status" value="1"/>
</dbReference>
<dbReference type="PANTHER" id="PTHR31321:SF57">
    <property type="entry name" value="PECTINESTERASE 53-RELATED"/>
    <property type="match status" value="1"/>
</dbReference>
<dbReference type="Pfam" id="PF01095">
    <property type="entry name" value="Pectinesterase"/>
    <property type="match status" value="1"/>
</dbReference>
<dbReference type="SUPFAM" id="SSF51126">
    <property type="entry name" value="Pectin lyase-like"/>
    <property type="match status" value="1"/>
</dbReference>
<dbReference type="PROSITE" id="PS00800">
    <property type="entry name" value="PECTINESTERASE_1"/>
    <property type="match status" value="1"/>
</dbReference>
<dbReference type="PROSITE" id="PS00503">
    <property type="entry name" value="PECTINESTERASE_2"/>
    <property type="match status" value="1"/>
</dbReference>
<organism>
    <name type="scientific">Dickeya dadantii (strain 3937)</name>
    <name type="common">Erwinia chrysanthemi (strain 3937)</name>
    <dbReference type="NCBI Taxonomy" id="198628"/>
    <lineage>
        <taxon>Bacteria</taxon>
        <taxon>Pseudomonadati</taxon>
        <taxon>Pseudomonadota</taxon>
        <taxon>Gammaproteobacteria</taxon>
        <taxon>Enterobacterales</taxon>
        <taxon>Pectobacteriaceae</taxon>
        <taxon>Dickeya</taxon>
    </lineage>
</organism>
<name>PMEB_DICD3</name>